<name>DPH5_CANGA</name>
<organism>
    <name type="scientific">Candida glabrata (strain ATCC 2001 / BCRC 20586 / JCM 3761 / NBRC 0622 / NRRL Y-65 / CBS 138)</name>
    <name type="common">Yeast</name>
    <name type="synonym">Nakaseomyces glabratus</name>
    <dbReference type="NCBI Taxonomy" id="284593"/>
    <lineage>
        <taxon>Eukaryota</taxon>
        <taxon>Fungi</taxon>
        <taxon>Dikarya</taxon>
        <taxon>Ascomycota</taxon>
        <taxon>Saccharomycotina</taxon>
        <taxon>Saccharomycetes</taxon>
        <taxon>Saccharomycetales</taxon>
        <taxon>Saccharomycetaceae</taxon>
        <taxon>Nakaseomyces</taxon>
    </lineage>
</organism>
<accession>Q6FXK9</accession>
<keyword id="KW-0963">Cytoplasm</keyword>
<keyword id="KW-0489">Methyltransferase</keyword>
<keyword id="KW-1185">Reference proteome</keyword>
<keyword id="KW-0949">S-adenosyl-L-methionine</keyword>
<keyword id="KW-0808">Transferase</keyword>
<sequence length="298" mass="33705">MLYLIGLGLSYKSDITVRGLEAVKNCTRVYLEHYTSILMAASKEELEEFYGKEVILADRELVESGSADILRDADKENVAFLVVGDPFGATTHTDLVLRAKKDKIPVEVIHNASVMNAVGSCGLQLYNFGQTISMVFFTDSWRPDSWYDKVMENRKIGLHTLVLLDIKVKEQSLENMARGRLIYEPPRYMSIAQCCQQLLEIEELRAEKAYTADTPVVGISRLGSPTQSFKAGTIKELAEYDAGEPLHSLVILGRQSHELELEYLLEFTDNKEKFKNDVIADQEYFKPAPWVPPVEEED</sequence>
<protein>
    <recommendedName>
        <fullName>Diphthine methyl ester synthase</fullName>
        <ecNumber>2.1.1.314</ecNumber>
    </recommendedName>
    <alternativeName>
        <fullName>Diphthamide biosynthesis methyltransferase</fullName>
    </alternativeName>
</protein>
<gene>
    <name type="primary">DPH5</name>
    <name type="ordered locus">CAGL0B04961g</name>
</gene>
<feature type="chain" id="PRO_0000156139" description="Diphthine methyl ester synthase">
    <location>
        <begin position="1"/>
        <end position="298"/>
    </location>
</feature>
<feature type="binding site" evidence="1">
    <location>
        <position position="9"/>
    </location>
    <ligand>
        <name>S-adenosyl-L-methionine</name>
        <dbReference type="ChEBI" id="CHEBI:59789"/>
    </ligand>
</feature>
<feature type="binding site" evidence="1">
    <location>
        <position position="85"/>
    </location>
    <ligand>
        <name>S-adenosyl-L-methionine</name>
        <dbReference type="ChEBI" id="CHEBI:59789"/>
    </ligand>
</feature>
<feature type="binding site" evidence="1">
    <location>
        <position position="88"/>
    </location>
    <ligand>
        <name>S-adenosyl-L-methionine</name>
        <dbReference type="ChEBI" id="CHEBI:59789"/>
    </ligand>
</feature>
<feature type="binding site" evidence="1">
    <location>
        <begin position="113"/>
        <end position="114"/>
    </location>
    <ligand>
        <name>S-adenosyl-L-methionine</name>
        <dbReference type="ChEBI" id="CHEBI:59789"/>
    </ligand>
</feature>
<feature type="binding site" evidence="1">
    <location>
        <position position="164"/>
    </location>
    <ligand>
        <name>S-adenosyl-L-methionine</name>
        <dbReference type="ChEBI" id="CHEBI:59789"/>
    </ligand>
</feature>
<feature type="binding site" evidence="1">
    <location>
        <position position="222"/>
    </location>
    <ligand>
        <name>S-adenosyl-L-methionine</name>
        <dbReference type="ChEBI" id="CHEBI:59789"/>
    </ligand>
</feature>
<feature type="binding site" evidence="1">
    <location>
        <position position="247"/>
    </location>
    <ligand>
        <name>S-adenosyl-L-methionine</name>
        <dbReference type="ChEBI" id="CHEBI:59789"/>
    </ligand>
</feature>
<evidence type="ECO:0000250" key="1"/>
<evidence type="ECO:0000250" key="2">
    <source>
        <dbReference type="UniProtKB" id="P32469"/>
    </source>
</evidence>
<evidence type="ECO:0000305" key="3"/>
<comment type="function">
    <text evidence="2">S-adenosyl-L-methionine-dependent methyltransferase that catalyzes four methylations of the modified target histidine residue in translation elongation factor 2 (EF-2), to form an intermediate called diphthine methyl ester. The four successive methylation reactions represent the second step of diphthamide biosynthesis.</text>
</comment>
<comment type="catalytic activity">
    <reaction evidence="2">
        <text>2-[(3S)-amino-3-carboxypropyl]-L-histidyl-[translation elongation factor 2] + 4 S-adenosyl-L-methionine = diphthine methyl ester-[translation elongation factor 2] + 4 S-adenosyl-L-homocysteine + 3 H(+)</text>
        <dbReference type="Rhea" id="RHEA:42652"/>
        <dbReference type="Rhea" id="RHEA-COMP:9749"/>
        <dbReference type="Rhea" id="RHEA-COMP:10173"/>
        <dbReference type="ChEBI" id="CHEBI:15378"/>
        <dbReference type="ChEBI" id="CHEBI:57856"/>
        <dbReference type="ChEBI" id="CHEBI:59789"/>
        <dbReference type="ChEBI" id="CHEBI:73995"/>
        <dbReference type="ChEBI" id="CHEBI:79005"/>
        <dbReference type="EC" id="2.1.1.314"/>
    </reaction>
</comment>
<comment type="pathway">
    <text>Protein modification; peptidyl-diphthamide biosynthesis.</text>
</comment>
<comment type="subcellular location">
    <subcellularLocation>
        <location evidence="1">Cytoplasm</location>
    </subcellularLocation>
</comment>
<comment type="similarity">
    <text evidence="3">Belongs to the diphthine synthase family.</text>
</comment>
<dbReference type="EC" id="2.1.1.314"/>
<dbReference type="EMBL" id="CR380948">
    <property type="protein sequence ID" value="CAG58086.1"/>
    <property type="molecule type" value="Genomic_DNA"/>
</dbReference>
<dbReference type="RefSeq" id="XP_445186.1">
    <property type="nucleotide sequence ID" value="XM_445186.1"/>
</dbReference>
<dbReference type="SMR" id="Q6FXK9"/>
<dbReference type="FunCoup" id="Q6FXK9">
    <property type="interactions" value="995"/>
</dbReference>
<dbReference type="STRING" id="284593.Q6FXK9"/>
<dbReference type="EnsemblFungi" id="CAGL0B04961g-T">
    <property type="protein sequence ID" value="CAGL0B04961g-T-p1"/>
    <property type="gene ID" value="CAGL0B04961g"/>
</dbReference>
<dbReference type="KEGG" id="cgr:2886596"/>
<dbReference type="CGD" id="CAL0127698">
    <property type="gene designation" value="CAGL0B04961g"/>
</dbReference>
<dbReference type="VEuPathDB" id="FungiDB:B1J91_B04961g"/>
<dbReference type="VEuPathDB" id="FungiDB:CAGL0B04961g"/>
<dbReference type="eggNOG" id="KOG3123">
    <property type="taxonomic scope" value="Eukaryota"/>
</dbReference>
<dbReference type="HOGENOM" id="CLU_066040_1_0_1"/>
<dbReference type="InParanoid" id="Q6FXK9"/>
<dbReference type="OMA" id="HNASIMS"/>
<dbReference type="UniPathway" id="UPA00559"/>
<dbReference type="Proteomes" id="UP000002428">
    <property type="component" value="Chromosome B"/>
</dbReference>
<dbReference type="GO" id="GO:0005737">
    <property type="term" value="C:cytoplasm"/>
    <property type="evidence" value="ECO:0007669"/>
    <property type="project" value="UniProtKB-SubCell"/>
</dbReference>
<dbReference type="GO" id="GO:0141133">
    <property type="term" value="F:diphthine methyl ester synthase activity"/>
    <property type="evidence" value="ECO:0007669"/>
    <property type="project" value="UniProtKB-EC"/>
</dbReference>
<dbReference type="GO" id="GO:0032259">
    <property type="term" value="P:methylation"/>
    <property type="evidence" value="ECO:0007669"/>
    <property type="project" value="UniProtKB-KW"/>
</dbReference>
<dbReference type="GO" id="GO:0017183">
    <property type="term" value="P:protein histidyl modification to diphthamide"/>
    <property type="evidence" value="ECO:0000250"/>
    <property type="project" value="UniProtKB"/>
</dbReference>
<dbReference type="CDD" id="cd11647">
    <property type="entry name" value="DHP5_DphB"/>
    <property type="match status" value="1"/>
</dbReference>
<dbReference type="FunFam" id="3.30.950.10:FF:000004">
    <property type="entry name" value="Diphthine synthase putative"/>
    <property type="match status" value="1"/>
</dbReference>
<dbReference type="FunFam" id="3.40.1010.10:FF:000004">
    <property type="entry name" value="Putative diphthine synthase"/>
    <property type="match status" value="1"/>
</dbReference>
<dbReference type="Gene3D" id="3.40.1010.10">
    <property type="entry name" value="Cobalt-precorrin-4 Transmethylase, Domain 1"/>
    <property type="match status" value="1"/>
</dbReference>
<dbReference type="Gene3D" id="3.30.950.10">
    <property type="entry name" value="Methyltransferase, Cobalt-precorrin-4 Transmethylase, Domain 2"/>
    <property type="match status" value="1"/>
</dbReference>
<dbReference type="HAMAP" id="MF_01084">
    <property type="entry name" value="Diphthine_synth"/>
    <property type="match status" value="1"/>
</dbReference>
<dbReference type="InterPro" id="IPR000878">
    <property type="entry name" value="4pyrrol_Mease"/>
</dbReference>
<dbReference type="InterPro" id="IPR035996">
    <property type="entry name" value="4pyrrol_Methylase_sf"/>
</dbReference>
<dbReference type="InterPro" id="IPR014777">
    <property type="entry name" value="4pyrrole_Mease_sub1"/>
</dbReference>
<dbReference type="InterPro" id="IPR014776">
    <property type="entry name" value="4pyrrole_Mease_sub2"/>
</dbReference>
<dbReference type="InterPro" id="IPR004551">
    <property type="entry name" value="Dphthn_synthase"/>
</dbReference>
<dbReference type="NCBIfam" id="TIGR00522">
    <property type="entry name" value="dph5"/>
    <property type="match status" value="1"/>
</dbReference>
<dbReference type="PANTHER" id="PTHR10882:SF0">
    <property type="entry name" value="DIPHTHINE METHYL ESTER SYNTHASE"/>
    <property type="match status" value="1"/>
</dbReference>
<dbReference type="PANTHER" id="PTHR10882">
    <property type="entry name" value="DIPHTHINE SYNTHASE"/>
    <property type="match status" value="1"/>
</dbReference>
<dbReference type="Pfam" id="PF00590">
    <property type="entry name" value="TP_methylase"/>
    <property type="match status" value="1"/>
</dbReference>
<dbReference type="PIRSF" id="PIRSF036432">
    <property type="entry name" value="Diphthine_synth"/>
    <property type="match status" value="1"/>
</dbReference>
<dbReference type="SUPFAM" id="SSF53790">
    <property type="entry name" value="Tetrapyrrole methylase"/>
    <property type="match status" value="1"/>
</dbReference>
<reference key="1">
    <citation type="journal article" date="2004" name="Nature">
        <title>Genome evolution in yeasts.</title>
        <authorList>
            <person name="Dujon B."/>
            <person name="Sherman D."/>
            <person name="Fischer G."/>
            <person name="Durrens P."/>
            <person name="Casaregola S."/>
            <person name="Lafontaine I."/>
            <person name="de Montigny J."/>
            <person name="Marck C."/>
            <person name="Neuveglise C."/>
            <person name="Talla E."/>
            <person name="Goffard N."/>
            <person name="Frangeul L."/>
            <person name="Aigle M."/>
            <person name="Anthouard V."/>
            <person name="Babour A."/>
            <person name="Barbe V."/>
            <person name="Barnay S."/>
            <person name="Blanchin S."/>
            <person name="Beckerich J.-M."/>
            <person name="Beyne E."/>
            <person name="Bleykasten C."/>
            <person name="Boisrame A."/>
            <person name="Boyer J."/>
            <person name="Cattolico L."/>
            <person name="Confanioleri F."/>
            <person name="de Daruvar A."/>
            <person name="Despons L."/>
            <person name="Fabre E."/>
            <person name="Fairhead C."/>
            <person name="Ferry-Dumazet H."/>
            <person name="Groppi A."/>
            <person name="Hantraye F."/>
            <person name="Hennequin C."/>
            <person name="Jauniaux N."/>
            <person name="Joyet P."/>
            <person name="Kachouri R."/>
            <person name="Kerrest A."/>
            <person name="Koszul R."/>
            <person name="Lemaire M."/>
            <person name="Lesur I."/>
            <person name="Ma L."/>
            <person name="Muller H."/>
            <person name="Nicaud J.-M."/>
            <person name="Nikolski M."/>
            <person name="Oztas S."/>
            <person name="Ozier-Kalogeropoulos O."/>
            <person name="Pellenz S."/>
            <person name="Potier S."/>
            <person name="Richard G.-F."/>
            <person name="Straub M.-L."/>
            <person name="Suleau A."/>
            <person name="Swennen D."/>
            <person name="Tekaia F."/>
            <person name="Wesolowski-Louvel M."/>
            <person name="Westhof E."/>
            <person name="Wirth B."/>
            <person name="Zeniou-Meyer M."/>
            <person name="Zivanovic Y."/>
            <person name="Bolotin-Fukuhara M."/>
            <person name="Thierry A."/>
            <person name="Bouchier C."/>
            <person name="Caudron B."/>
            <person name="Scarpelli C."/>
            <person name="Gaillardin C."/>
            <person name="Weissenbach J."/>
            <person name="Wincker P."/>
            <person name="Souciet J.-L."/>
        </authorList>
    </citation>
    <scope>NUCLEOTIDE SEQUENCE [LARGE SCALE GENOMIC DNA]</scope>
    <source>
        <strain>ATCC 2001 / BCRC 20586 / JCM 3761 / NBRC 0622 / NRRL Y-65 / CBS 138</strain>
    </source>
</reference>
<proteinExistence type="inferred from homology"/>